<protein>
    <recommendedName>
        <fullName evidence="1">L-threonine 3-dehydrogenase</fullName>
        <shortName evidence="1">TDH</shortName>
        <ecNumber evidence="1">1.1.1.103</ecNumber>
    </recommendedName>
</protein>
<sequence>MKALAKLERGPGLTLTRVKKPEVGHNDVLIKIRRTAICGTDIHIWKWDDWAQKTIPVPMHVGHEYVGEIVEMGQEVRGFSIGDRVSGEGHITCGFCRNCRAGRRHLCRNTVGVGVNREGAFAEYLAIPAFNAFKIPPEISDDLAAIFDPFGNATHTALSFNLVGEDVLITGAGPIGVMAVAIAKHVGARNVVITDINDYRLELARKMGATRAVNVSRESLRDVMADLHMTEGFDVGLEMSGVPSAFTSLLESMNHGGKVALLGIPPAQTAIDWNQVIFKGLEIKGIYGREMFETWYKMVAMLQSGLDLSPIITHRFAVDDYEKGFAAMLSGESGKVILDWADA</sequence>
<reference key="1">
    <citation type="journal article" date="2010" name="Genome Biol. Evol.">
        <title>Continuing evolution of Burkholderia mallei through genome reduction and large-scale rearrangements.</title>
        <authorList>
            <person name="Losada L."/>
            <person name="Ronning C.M."/>
            <person name="DeShazer D."/>
            <person name="Woods D."/>
            <person name="Fedorova N."/>
            <person name="Kim H.S."/>
            <person name="Shabalina S.A."/>
            <person name="Pearson T.R."/>
            <person name="Brinkac L."/>
            <person name="Tan P."/>
            <person name="Nandi T."/>
            <person name="Crabtree J."/>
            <person name="Badger J."/>
            <person name="Beckstrom-Sternberg S."/>
            <person name="Saqib M."/>
            <person name="Schutzer S.E."/>
            <person name="Keim P."/>
            <person name="Nierman W.C."/>
        </authorList>
    </citation>
    <scope>NUCLEOTIDE SEQUENCE [LARGE SCALE GENOMIC DNA]</scope>
    <source>
        <strain>SAVP1</strain>
    </source>
</reference>
<feature type="chain" id="PRO_1000051622" description="L-threonine 3-dehydrogenase">
    <location>
        <begin position="1"/>
        <end position="343"/>
    </location>
</feature>
<feature type="active site" description="Charge relay system" evidence="1">
    <location>
        <position position="40"/>
    </location>
</feature>
<feature type="active site" description="Charge relay system" evidence="1">
    <location>
        <position position="43"/>
    </location>
</feature>
<feature type="binding site" evidence="1">
    <location>
        <position position="38"/>
    </location>
    <ligand>
        <name>Zn(2+)</name>
        <dbReference type="ChEBI" id="CHEBI:29105"/>
        <label>1</label>
        <note>catalytic</note>
    </ligand>
</feature>
<feature type="binding site" evidence="1">
    <location>
        <position position="63"/>
    </location>
    <ligand>
        <name>Zn(2+)</name>
        <dbReference type="ChEBI" id="CHEBI:29105"/>
        <label>1</label>
        <note>catalytic</note>
    </ligand>
</feature>
<feature type="binding site" evidence="1">
    <location>
        <position position="64"/>
    </location>
    <ligand>
        <name>Zn(2+)</name>
        <dbReference type="ChEBI" id="CHEBI:29105"/>
        <label>1</label>
        <note>catalytic</note>
    </ligand>
</feature>
<feature type="binding site" evidence="1">
    <location>
        <position position="93"/>
    </location>
    <ligand>
        <name>Zn(2+)</name>
        <dbReference type="ChEBI" id="CHEBI:29105"/>
        <label>2</label>
    </ligand>
</feature>
<feature type="binding site" evidence="1">
    <location>
        <position position="96"/>
    </location>
    <ligand>
        <name>Zn(2+)</name>
        <dbReference type="ChEBI" id="CHEBI:29105"/>
        <label>2</label>
    </ligand>
</feature>
<feature type="binding site" evidence="1">
    <location>
        <position position="99"/>
    </location>
    <ligand>
        <name>Zn(2+)</name>
        <dbReference type="ChEBI" id="CHEBI:29105"/>
        <label>2</label>
    </ligand>
</feature>
<feature type="binding site" evidence="1">
    <location>
        <position position="107"/>
    </location>
    <ligand>
        <name>Zn(2+)</name>
        <dbReference type="ChEBI" id="CHEBI:29105"/>
        <label>2</label>
    </ligand>
</feature>
<feature type="binding site" evidence="1">
    <location>
        <position position="175"/>
    </location>
    <ligand>
        <name>NAD(+)</name>
        <dbReference type="ChEBI" id="CHEBI:57540"/>
    </ligand>
</feature>
<feature type="binding site" evidence="1">
    <location>
        <position position="195"/>
    </location>
    <ligand>
        <name>NAD(+)</name>
        <dbReference type="ChEBI" id="CHEBI:57540"/>
    </ligand>
</feature>
<feature type="binding site" evidence="1">
    <location>
        <position position="200"/>
    </location>
    <ligand>
        <name>NAD(+)</name>
        <dbReference type="ChEBI" id="CHEBI:57540"/>
    </ligand>
</feature>
<feature type="binding site" evidence="1">
    <location>
        <begin position="262"/>
        <end position="264"/>
    </location>
    <ligand>
        <name>NAD(+)</name>
        <dbReference type="ChEBI" id="CHEBI:57540"/>
    </ligand>
</feature>
<feature type="binding site" evidence="1">
    <location>
        <begin position="286"/>
        <end position="287"/>
    </location>
    <ligand>
        <name>NAD(+)</name>
        <dbReference type="ChEBI" id="CHEBI:57540"/>
    </ligand>
</feature>
<feature type="site" description="Important for catalytic activity for the proton relay mechanism but does not participate directly in the coordination of zinc atom" evidence="1">
    <location>
        <position position="148"/>
    </location>
</feature>
<accession>A1UXP8</accession>
<keyword id="KW-0963">Cytoplasm</keyword>
<keyword id="KW-0479">Metal-binding</keyword>
<keyword id="KW-0520">NAD</keyword>
<keyword id="KW-0560">Oxidoreductase</keyword>
<keyword id="KW-0862">Zinc</keyword>
<proteinExistence type="inferred from homology"/>
<name>TDH_BURMS</name>
<organism>
    <name type="scientific">Burkholderia mallei (strain SAVP1)</name>
    <dbReference type="NCBI Taxonomy" id="320388"/>
    <lineage>
        <taxon>Bacteria</taxon>
        <taxon>Pseudomonadati</taxon>
        <taxon>Pseudomonadota</taxon>
        <taxon>Betaproteobacteria</taxon>
        <taxon>Burkholderiales</taxon>
        <taxon>Burkholderiaceae</taxon>
        <taxon>Burkholderia</taxon>
        <taxon>pseudomallei group</taxon>
    </lineage>
</organism>
<dbReference type="EC" id="1.1.1.103" evidence="1"/>
<dbReference type="EMBL" id="CP000525">
    <property type="protein sequence ID" value="ABM48134.1"/>
    <property type="molecule type" value="Genomic_DNA"/>
</dbReference>
<dbReference type="RefSeq" id="WP_004194543.1">
    <property type="nucleotide sequence ID" value="NC_008784.1"/>
</dbReference>
<dbReference type="SMR" id="A1UXP8"/>
<dbReference type="GeneID" id="93062068"/>
<dbReference type="KEGG" id="bmv:BMASAVP1_1152"/>
<dbReference type="HOGENOM" id="CLU_026673_11_0_4"/>
<dbReference type="UniPathway" id="UPA00046">
    <property type="reaction ID" value="UER00505"/>
</dbReference>
<dbReference type="GO" id="GO:0005737">
    <property type="term" value="C:cytoplasm"/>
    <property type="evidence" value="ECO:0007669"/>
    <property type="project" value="UniProtKB-SubCell"/>
</dbReference>
<dbReference type="GO" id="GO:0008743">
    <property type="term" value="F:L-threonine 3-dehydrogenase activity"/>
    <property type="evidence" value="ECO:0007669"/>
    <property type="project" value="UniProtKB-UniRule"/>
</dbReference>
<dbReference type="GO" id="GO:0008270">
    <property type="term" value="F:zinc ion binding"/>
    <property type="evidence" value="ECO:0007669"/>
    <property type="project" value="UniProtKB-UniRule"/>
</dbReference>
<dbReference type="GO" id="GO:0019518">
    <property type="term" value="P:L-threonine catabolic process to glycine"/>
    <property type="evidence" value="ECO:0007669"/>
    <property type="project" value="UniProtKB-UniPathway"/>
</dbReference>
<dbReference type="Gene3D" id="3.90.180.10">
    <property type="entry name" value="Medium-chain alcohol dehydrogenases, catalytic domain"/>
    <property type="match status" value="1"/>
</dbReference>
<dbReference type="Gene3D" id="3.40.50.720">
    <property type="entry name" value="NAD(P)-binding Rossmann-like Domain"/>
    <property type="match status" value="1"/>
</dbReference>
<dbReference type="HAMAP" id="MF_00627">
    <property type="entry name" value="Thr_dehydrog"/>
    <property type="match status" value="1"/>
</dbReference>
<dbReference type="InterPro" id="IPR013149">
    <property type="entry name" value="ADH-like_C"/>
</dbReference>
<dbReference type="InterPro" id="IPR013154">
    <property type="entry name" value="ADH-like_N"/>
</dbReference>
<dbReference type="InterPro" id="IPR002328">
    <property type="entry name" value="ADH_Zn_CS"/>
</dbReference>
<dbReference type="InterPro" id="IPR011032">
    <property type="entry name" value="GroES-like_sf"/>
</dbReference>
<dbReference type="InterPro" id="IPR004627">
    <property type="entry name" value="L-Threonine_3-DHase"/>
</dbReference>
<dbReference type="InterPro" id="IPR036291">
    <property type="entry name" value="NAD(P)-bd_dom_sf"/>
</dbReference>
<dbReference type="InterPro" id="IPR020843">
    <property type="entry name" value="PKS_ER"/>
</dbReference>
<dbReference type="InterPro" id="IPR050129">
    <property type="entry name" value="Zn_alcohol_dh"/>
</dbReference>
<dbReference type="NCBIfam" id="NF003808">
    <property type="entry name" value="PRK05396.1"/>
    <property type="match status" value="1"/>
</dbReference>
<dbReference type="NCBIfam" id="TIGR00692">
    <property type="entry name" value="tdh"/>
    <property type="match status" value="1"/>
</dbReference>
<dbReference type="PANTHER" id="PTHR43401">
    <property type="entry name" value="L-THREONINE 3-DEHYDROGENASE"/>
    <property type="match status" value="1"/>
</dbReference>
<dbReference type="PANTHER" id="PTHR43401:SF2">
    <property type="entry name" value="L-THREONINE 3-DEHYDROGENASE"/>
    <property type="match status" value="1"/>
</dbReference>
<dbReference type="Pfam" id="PF08240">
    <property type="entry name" value="ADH_N"/>
    <property type="match status" value="1"/>
</dbReference>
<dbReference type="Pfam" id="PF00107">
    <property type="entry name" value="ADH_zinc_N"/>
    <property type="match status" value="1"/>
</dbReference>
<dbReference type="SMART" id="SM00829">
    <property type="entry name" value="PKS_ER"/>
    <property type="match status" value="1"/>
</dbReference>
<dbReference type="SUPFAM" id="SSF50129">
    <property type="entry name" value="GroES-like"/>
    <property type="match status" value="1"/>
</dbReference>
<dbReference type="SUPFAM" id="SSF51735">
    <property type="entry name" value="NAD(P)-binding Rossmann-fold domains"/>
    <property type="match status" value="1"/>
</dbReference>
<dbReference type="PROSITE" id="PS00059">
    <property type="entry name" value="ADH_ZINC"/>
    <property type="match status" value="1"/>
</dbReference>
<evidence type="ECO:0000255" key="1">
    <source>
        <dbReference type="HAMAP-Rule" id="MF_00627"/>
    </source>
</evidence>
<gene>
    <name evidence="1" type="primary">tdh</name>
    <name type="ordered locus">BMASAVP1_1152</name>
</gene>
<comment type="function">
    <text evidence="1">Catalyzes the NAD(+)-dependent oxidation of L-threonine to 2-amino-3-ketobutyrate.</text>
</comment>
<comment type="catalytic activity">
    <reaction evidence="1">
        <text>L-threonine + NAD(+) = (2S)-2-amino-3-oxobutanoate + NADH + H(+)</text>
        <dbReference type="Rhea" id="RHEA:13161"/>
        <dbReference type="ChEBI" id="CHEBI:15378"/>
        <dbReference type="ChEBI" id="CHEBI:57540"/>
        <dbReference type="ChEBI" id="CHEBI:57926"/>
        <dbReference type="ChEBI" id="CHEBI:57945"/>
        <dbReference type="ChEBI" id="CHEBI:78948"/>
        <dbReference type="EC" id="1.1.1.103"/>
    </reaction>
</comment>
<comment type="cofactor">
    <cofactor evidence="1">
        <name>Zn(2+)</name>
        <dbReference type="ChEBI" id="CHEBI:29105"/>
    </cofactor>
    <text evidence="1">Binds 2 Zn(2+) ions per subunit.</text>
</comment>
<comment type="pathway">
    <text evidence="1">Amino-acid degradation; L-threonine degradation via oxydo-reductase pathway; glycine from L-threonine: step 1/2.</text>
</comment>
<comment type="subunit">
    <text evidence="1">Homotetramer.</text>
</comment>
<comment type="subcellular location">
    <subcellularLocation>
        <location evidence="1">Cytoplasm</location>
    </subcellularLocation>
</comment>
<comment type="similarity">
    <text evidence="1">Belongs to the zinc-containing alcohol dehydrogenase family.</text>
</comment>